<organism>
    <name type="scientific">Pseudomonas fluorescens (strain ATCC BAA-477 / NRRL B-23932 / Pf-5)</name>
    <dbReference type="NCBI Taxonomy" id="220664"/>
    <lineage>
        <taxon>Bacteria</taxon>
        <taxon>Pseudomonadati</taxon>
        <taxon>Pseudomonadota</taxon>
        <taxon>Gammaproteobacteria</taxon>
        <taxon>Pseudomonadales</taxon>
        <taxon>Pseudomonadaceae</taxon>
        <taxon>Pseudomonas</taxon>
    </lineage>
</organism>
<comment type="function">
    <text evidence="1">Heme-dependent dioxygenase that catalyzes the oxidative cleavage of the L-tryptophan (L-Trp) pyrrole ring and converts L-tryptophan to N-formyl-L-kynurenine. Catalyzes the oxidative cleavage of the indole moiety.</text>
</comment>
<comment type="catalytic activity">
    <reaction evidence="1">
        <text>L-tryptophan + O2 = N-formyl-L-kynurenine</text>
        <dbReference type="Rhea" id="RHEA:24536"/>
        <dbReference type="ChEBI" id="CHEBI:15379"/>
        <dbReference type="ChEBI" id="CHEBI:57912"/>
        <dbReference type="ChEBI" id="CHEBI:58629"/>
        <dbReference type="EC" id="1.13.11.11"/>
    </reaction>
</comment>
<comment type="cofactor">
    <cofactor evidence="1">
        <name>heme</name>
        <dbReference type="ChEBI" id="CHEBI:30413"/>
    </cofactor>
    <text evidence="1">Binds 1 heme group per subunit.</text>
</comment>
<comment type="pathway">
    <text evidence="1">Amino-acid degradation; L-tryptophan degradation via kynurenine pathway; L-kynurenine from L-tryptophan: step 1/2.</text>
</comment>
<comment type="subunit">
    <text evidence="1">Homotetramer.</text>
</comment>
<comment type="similarity">
    <text evidence="1">Belongs to the tryptophan 2,3-dioxygenase family.</text>
</comment>
<evidence type="ECO:0000255" key="1">
    <source>
        <dbReference type="HAMAP-Rule" id="MF_01972"/>
    </source>
</evidence>
<sequence>MSQCPFSSNPPAEWHNAELNFSDSMSYGDYLDLGRILSAQHPLSPDHNEMLFIIQHQTSELWMKLMLHELKAAREHVRQGQLPPAFKMLARVSRIFDQLVHAWAVLATMTPSEYKSIRPYLGQSSGFQSFQYREIEFILGNKSAALLRPHAHRPELLQSLEASIATPSMYDEAIALMARSGLSIDPARLALDSTTTTQHDPSVEAAWREVYANPSAYWDLYQLAEKFIDLEDSFRQWRFRHVTTVERIIGFQPGTGGTEGVGYLRKMLDTVLFPELWRVRSSL</sequence>
<proteinExistence type="inferred from homology"/>
<keyword id="KW-0223">Dioxygenase</keyword>
<keyword id="KW-0349">Heme</keyword>
<keyword id="KW-0408">Iron</keyword>
<keyword id="KW-0479">Metal-binding</keyword>
<keyword id="KW-0560">Oxidoreductase</keyword>
<keyword id="KW-0823">Tryptophan catabolism</keyword>
<accession>Q4KIP3</accession>
<reference key="1">
    <citation type="journal article" date="2005" name="Nat. Biotechnol.">
        <title>Complete genome sequence of the plant commensal Pseudomonas fluorescens Pf-5.</title>
        <authorList>
            <person name="Paulsen I.T."/>
            <person name="Press C.M."/>
            <person name="Ravel J."/>
            <person name="Kobayashi D.Y."/>
            <person name="Myers G.S.A."/>
            <person name="Mavrodi D.V."/>
            <person name="DeBoy R.T."/>
            <person name="Seshadri R."/>
            <person name="Ren Q."/>
            <person name="Madupu R."/>
            <person name="Dodson R.J."/>
            <person name="Durkin A.S."/>
            <person name="Brinkac L.M."/>
            <person name="Daugherty S.C."/>
            <person name="Sullivan S.A."/>
            <person name="Rosovitz M.J."/>
            <person name="Gwinn M.L."/>
            <person name="Zhou L."/>
            <person name="Schneider D.J."/>
            <person name="Cartinhour S.W."/>
            <person name="Nelson W.C."/>
            <person name="Weidman J."/>
            <person name="Watkins K."/>
            <person name="Tran K."/>
            <person name="Khouri H."/>
            <person name="Pierson E.A."/>
            <person name="Pierson L.S. III"/>
            <person name="Thomashow L.S."/>
            <person name="Loper J.E."/>
        </authorList>
    </citation>
    <scope>NUCLEOTIDE SEQUENCE [LARGE SCALE GENOMIC DNA]</scope>
    <source>
        <strain>ATCC BAA-477 / NRRL B-23932 / Pf-5</strain>
    </source>
</reference>
<feature type="chain" id="PRO_0000360125" description="Tryptophan 2,3-dioxygenase">
    <location>
        <begin position="1"/>
        <end position="283"/>
    </location>
</feature>
<feature type="binding site" evidence="1">
    <location>
        <begin position="52"/>
        <end position="56"/>
    </location>
    <ligand>
        <name>substrate</name>
    </ligand>
</feature>
<feature type="binding site" evidence="1">
    <location>
        <position position="114"/>
    </location>
    <ligand>
        <name>substrate</name>
    </ligand>
</feature>
<feature type="binding site" evidence="1">
    <location>
        <position position="118"/>
    </location>
    <ligand>
        <name>substrate</name>
    </ligand>
</feature>
<feature type="binding site" description="axial binding residue" evidence="1">
    <location>
        <position position="241"/>
    </location>
    <ligand>
        <name>heme</name>
        <dbReference type="ChEBI" id="CHEBI:30413"/>
    </ligand>
    <ligandPart>
        <name>Fe</name>
        <dbReference type="ChEBI" id="CHEBI:18248"/>
    </ligandPart>
</feature>
<feature type="binding site" evidence="1">
    <location>
        <position position="255"/>
    </location>
    <ligand>
        <name>substrate</name>
    </ligand>
</feature>
<dbReference type="EC" id="1.13.11.11" evidence="1"/>
<dbReference type="EMBL" id="CP000076">
    <property type="protein sequence ID" value="AAY96155.1"/>
    <property type="molecule type" value="Genomic_DNA"/>
</dbReference>
<dbReference type="RefSeq" id="WP_011059117.1">
    <property type="nucleotide sequence ID" value="NC_004129.6"/>
</dbReference>
<dbReference type="SMR" id="Q4KIP3"/>
<dbReference type="STRING" id="220664.PFL_0753"/>
<dbReference type="GeneID" id="57473746"/>
<dbReference type="KEGG" id="pfl:PFL_0753"/>
<dbReference type="PATRIC" id="fig|220664.5.peg.773"/>
<dbReference type="eggNOG" id="COG3483">
    <property type="taxonomic scope" value="Bacteria"/>
</dbReference>
<dbReference type="HOGENOM" id="CLU_063240_0_0_6"/>
<dbReference type="UniPathway" id="UPA00333">
    <property type="reaction ID" value="UER00453"/>
</dbReference>
<dbReference type="Proteomes" id="UP000008540">
    <property type="component" value="Chromosome"/>
</dbReference>
<dbReference type="GO" id="GO:0020037">
    <property type="term" value="F:heme binding"/>
    <property type="evidence" value="ECO:0000250"/>
    <property type="project" value="UniProtKB"/>
</dbReference>
<dbReference type="GO" id="GO:0046872">
    <property type="term" value="F:metal ion binding"/>
    <property type="evidence" value="ECO:0007669"/>
    <property type="project" value="UniProtKB-KW"/>
</dbReference>
<dbReference type="GO" id="GO:0004833">
    <property type="term" value="F:tryptophan 2,3-dioxygenase activity"/>
    <property type="evidence" value="ECO:0000250"/>
    <property type="project" value="UniProtKB"/>
</dbReference>
<dbReference type="GO" id="GO:0019442">
    <property type="term" value="P:L-tryptophan catabolic process to acetyl-CoA"/>
    <property type="evidence" value="ECO:0007669"/>
    <property type="project" value="TreeGrafter"/>
</dbReference>
<dbReference type="GO" id="GO:0019441">
    <property type="term" value="P:L-tryptophan catabolic process to kynurenine"/>
    <property type="evidence" value="ECO:0000250"/>
    <property type="project" value="UniProtKB"/>
</dbReference>
<dbReference type="FunFam" id="1.20.58.480:FF:000001">
    <property type="entry name" value="Tryptophan 2,3-dioxygenase"/>
    <property type="match status" value="1"/>
</dbReference>
<dbReference type="Gene3D" id="1.20.58.480">
    <property type="match status" value="1"/>
</dbReference>
<dbReference type="HAMAP" id="MF_01972">
    <property type="entry name" value="T23O"/>
    <property type="match status" value="1"/>
</dbReference>
<dbReference type="InterPro" id="IPR037217">
    <property type="entry name" value="Trp/Indoleamine_2_3_dOase-like"/>
</dbReference>
<dbReference type="InterPro" id="IPR017485">
    <property type="entry name" value="Trp_2-3-dOase_bac"/>
</dbReference>
<dbReference type="InterPro" id="IPR004981">
    <property type="entry name" value="Trp_2_3_dOase"/>
</dbReference>
<dbReference type="NCBIfam" id="TIGR03036">
    <property type="entry name" value="trp_2_3_diox"/>
    <property type="match status" value="1"/>
</dbReference>
<dbReference type="PANTHER" id="PTHR10138">
    <property type="entry name" value="TRYPTOPHAN 2,3-DIOXYGENASE"/>
    <property type="match status" value="1"/>
</dbReference>
<dbReference type="PANTHER" id="PTHR10138:SF0">
    <property type="entry name" value="TRYPTOPHAN 2,3-DIOXYGENASE"/>
    <property type="match status" value="1"/>
</dbReference>
<dbReference type="Pfam" id="PF03301">
    <property type="entry name" value="Trp_dioxygenase"/>
    <property type="match status" value="2"/>
</dbReference>
<dbReference type="SUPFAM" id="SSF140959">
    <property type="entry name" value="Indolic compounds 2,3-dioxygenase-like"/>
    <property type="match status" value="1"/>
</dbReference>
<gene>
    <name evidence="1" type="primary">kynA</name>
    <name type="ordered locus">PFL_0753</name>
</gene>
<name>T23O_PSEF5</name>
<protein>
    <recommendedName>
        <fullName evidence="1">Tryptophan 2,3-dioxygenase</fullName>
        <shortName evidence="1">TDO</shortName>
        <ecNumber evidence="1">1.13.11.11</ecNumber>
    </recommendedName>
    <alternativeName>
        <fullName evidence="1">Tryptamin 2,3-dioxygenase</fullName>
    </alternativeName>
    <alternativeName>
        <fullName evidence="1">Tryptophan oxygenase</fullName>
        <shortName evidence="1">TO</shortName>
        <shortName evidence="1">TRPO</shortName>
    </alternativeName>
    <alternativeName>
        <fullName evidence="1">Tryptophan pyrrolase</fullName>
    </alternativeName>
    <alternativeName>
        <fullName evidence="1">Tryptophanase</fullName>
    </alternativeName>
</protein>